<accession>Q7WDL7</accession>
<proteinExistence type="inferred from homology"/>
<dbReference type="EC" id="4.1.99.12" evidence="1"/>
<dbReference type="EMBL" id="BX640452">
    <property type="protein sequence ID" value="CAE35335.1"/>
    <property type="molecule type" value="Genomic_DNA"/>
</dbReference>
<dbReference type="RefSeq" id="WP_003815993.1">
    <property type="nucleotide sequence ID" value="NC_002927.3"/>
</dbReference>
<dbReference type="SMR" id="Q7WDL7"/>
<dbReference type="GeneID" id="93206185"/>
<dbReference type="KEGG" id="bbr:BB4971"/>
<dbReference type="eggNOG" id="COG0108">
    <property type="taxonomic scope" value="Bacteria"/>
</dbReference>
<dbReference type="HOGENOM" id="CLU_020273_3_0_4"/>
<dbReference type="UniPathway" id="UPA00275">
    <property type="reaction ID" value="UER00399"/>
</dbReference>
<dbReference type="Proteomes" id="UP000001027">
    <property type="component" value="Chromosome"/>
</dbReference>
<dbReference type="GO" id="GO:0005829">
    <property type="term" value="C:cytosol"/>
    <property type="evidence" value="ECO:0007669"/>
    <property type="project" value="TreeGrafter"/>
</dbReference>
<dbReference type="GO" id="GO:0008686">
    <property type="term" value="F:3,4-dihydroxy-2-butanone-4-phosphate synthase activity"/>
    <property type="evidence" value="ECO:0007669"/>
    <property type="project" value="UniProtKB-UniRule"/>
</dbReference>
<dbReference type="GO" id="GO:0000287">
    <property type="term" value="F:magnesium ion binding"/>
    <property type="evidence" value="ECO:0007669"/>
    <property type="project" value="UniProtKB-UniRule"/>
</dbReference>
<dbReference type="GO" id="GO:0030145">
    <property type="term" value="F:manganese ion binding"/>
    <property type="evidence" value="ECO:0007669"/>
    <property type="project" value="UniProtKB-UniRule"/>
</dbReference>
<dbReference type="GO" id="GO:0009231">
    <property type="term" value="P:riboflavin biosynthetic process"/>
    <property type="evidence" value="ECO:0007669"/>
    <property type="project" value="UniProtKB-UniRule"/>
</dbReference>
<dbReference type="Gene3D" id="3.90.870.10">
    <property type="entry name" value="DHBP synthase"/>
    <property type="match status" value="1"/>
</dbReference>
<dbReference type="HAMAP" id="MF_00180">
    <property type="entry name" value="RibB"/>
    <property type="match status" value="1"/>
</dbReference>
<dbReference type="InterPro" id="IPR017945">
    <property type="entry name" value="DHBP_synth_RibB-like_a/b_dom"/>
</dbReference>
<dbReference type="InterPro" id="IPR000422">
    <property type="entry name" value="DHBP_synthase_RibB"/>
</dbReference>
<dbReference type="NCBIfam" id="TIGR00506">
    <property type="entry name" value="ribB"/>
    <property type="match status" value="1"/>
</dbReference>
<dbReference type="PANTHER" id="PTHR21327:SF38">
    <property type="entry name" value="3,4-DIHYDROXY-2-BUTANONE 4-PHOSPHATE SYNTHASE"/>
    <property type="match status" value="1"/>
</dbReference>
<dbReference type="PANTHER" id="PTHR21327">
    <property type="entry name" value="GTP CYCLOHYDROLASE II-RELATED"/>
    <property type="match status" value="1"/>
</dbReference>
<dbReference type="Pfam" id="PF00926">
    <property type="entry name" value="DHBP_synthase"/>
    <property type="match status" value="1"/>
</dbReference>
<dbReference type="SUPFAM" id="SSF55821">
    <property type="entry name" value="YrdC/RibB"/>
    <property type="match status" value="1"/>
</dbReference>
<keyword id="KW-0456">Lyase</keyword>
<keyword id="KW-0460">Magnesium</keyword>
<keyword id="KW-0464">Manganese</keyword>
<keyword id="KW-0479">Metal-binding</keyword>
<keyword id="KW-0686">Riboflavin biosynthesis</keyword>
<gene>
    <name evidence="1" type="primary">ribB</name>
    <name type="ordered locus">BB4971</name>
</gene>
<organism>
    <name type="scientific">Bordetella bronchiseptica (strain ATCC BAA-588 / NCTC 13252 / RB50)</name>
    <name type="common">Alcaligenes bronchisepticus</name>
    <dbReference type="NCBI Taxonomy" id="257310"/>
    <lineage>
        <taxon>Bacteria</taxon>
        <taxon>Pseudomonadati</taxon>
        <taxon>Pseudomonadota</taxon>
        <taxon>Betaproteobacteria</taxon>
        <taxon>Burkholderiales</taxon>
        <taxon>Alcaligenaceae</taxon>
        <taxon>Bordetella</taxon>
    </lineage>
</organism>
<comment type="function">
    <text evidence="1">Catalyzes the conversion of D-ribulose 5-phosphate to formate and 3,4-dihydroxy-2-butanone 4-phosphate.</text>
</comment>
<comment type="catalytic activity">
    <reaction evidence="1">
        <text>D-ribulose 5-phosphate = (2S)-2-hydroxy-3-oxobutyl phosphate + formate + H(+)</text>
        <dbReference type="Rhea" id="RHEA:18457"/>
        <dbReference type="ChEBI" id="CHEBI:15378"/>
        <dbReference type="ChEBI" id="CHEBI:15740"/>
        <dbReference type="ChEBI" id="CHEBI:58121"/>
        <dbReference type="ChEBI" id="CHEBI:58830"/>
        <dbReference type="EC" id="4.1.99.12"/>
    </reaction>
</comment>
<comment type="cofactor">
    <cofactor evidence="1">
        <name>Mg(2+)</name>
        <dbReference type="ChEBI" id="CHEBI:18420"/>
    </cofactor>
    <cofactor evidence="1">
        <name>Mn(2+)</name>
        <dbReference type="ChEBI" id="CHEBI:29035"/>
    </cofactor>
    <text evidence="1">Binds 2 divalent metal cations per subunit. Magnesium or manganese.</text>
</comment>
<comment type="pathway">
    <text evidence="1">Cofactor biosynthesis; riboflavin biosynthesis; 2-hydroxy-3-oxobutyl phosphate from D-ribulose 5-phosphate: step 1/1.</text>
</comment>
<comment type="subunit">
    <text evidence="1">Homodimer.</text>
</comment>
<comment type="similarity">
    <text evidence="1">Belongs to the DHBP synthase family.</text>
</comment>
<protein>
    <recommendedName>
        <fullName evidence="1">3,4-dihydroxy-2-butanone 4-phosphate synthase</fullName>
        <shortName evidence="1">DHBP synthase</shortName>
        <ecNumber evidence="1">4.1.99.12</ecNumber>
    </recommendedName>
</protein>
<feature type="chain" id="PRO_0000151788" description="3,4-dihydroxy-2-butanone 4-phosphate synthase">
    <location>
        <begin position="1"/>
        <end position="230"/>
    </location>
</feature>
<feature type="binding site" evidence="1">
    <location>
        <begin position="42"/>
        <end position="43"/>
    </location>
    <ligand>
        <name>D-ribulose 5-phosphate</name>
        <dbReference type="ChEBI" id="CHEBI:58121"/>
    </ligand>
</feature>
<feature type="binding site" evidence="1">
    <location>
        <position position="43"/>
    </location>
    <ligand>
        <name>Mg(2+)</name>
        <dbReference type="ChEBI" id="CHEBI:18420"/>
        <label>1</label>
    </ligand>
</feature>
<feature type="binding site" evidence="1">
    <location>
        <position position="43"/>
    </location>
    <ligand>
        <name>Mg(2+)</name>
        <dbReference type="ChEBI" id="CHEBI:18420"/>
        <label>2</label>
    </ligand>
</feature>
<feature type="binding site" evidence="1">
    <location>
        <position position="47"/>
    </location>
    <ligand>
        <name>D-ribulose 5-phosphate</name>
        <dbReference type="ChEBI" id="CHEBI:58121"/>
    </ligand>
</feature>
<feature type="binding site" evidence="1">
    <location>
        <begin position="155"/>
        <end position="159"/>
    </location>
    <ligand>
        <name>D-ribulose 5-phosphate</name>
        <dbReference type="ChEBI" id="CHEBI:58121"/>
    </ligand>
</feature>
<feature type="binding site" evidence="1">
    <location>
        <position position="158"/>
    </location>
    <ligand>
        <name>Mg(2+)</name>
        <dbReference type="ChEBI" id="CHEBI:18420"/>
        <label>2</label>
    </ligand>
</feature>
<feature type="binding site" evidence="1">
    <location>
        <position position="179"/>
    </location>
    <ligand>
        <name>D-ribulose 5-phosphate</name>
        <dbReference type="ChEBI" id="CHEBI:58121"/>
    </ligand>
</feature>
<feature type="site" description="Essential for catalytic activity" evidence="1">
    <location>
        <position position="141"/>
    </location>
</feature>
<feature type="site" description="Essential for catalytic activity" evidence="1">
    <location>
        <position position="179"/>
    </location>
</feature>
<name>RIBB_BORBR</name>
<evidence type="ECO:0000255" key="1">
    <source>
        <dbReference type="HAMAP-Rule" id="MF_00180"/>
    </source>
</evidence>
<sequence length="230" mass="24125">MSNVVPTPVSPLFAQPFATRLERALQHLRIGRPVILMDDFDRENEADLIVAADKLTVPVMAQLIRDGSGIVCLCLPGETLDRLELPPMVDSNRSRYSTAFTVSIEAREGVTTGVSAVDRVTTIRAAIAPGARSGDVVSPGHVFPLRAQPGGVLTRRGHTEGSVDLAALAGLRPAGVLCELMNADGTMMRGASLERYAAKEGLVALAIDELAAHLQARGATGAPAELAVAA</sequence>
<reference key="1">
    <citation type="journal article" date="2003" name="Nat. Genet.">
        <title>Comparative analysis of the genome sequences of Bordetella pertussis, Bordetella parapertussis and Bordetella bronchiseptica.</title>
        <authorList>
            <person name="Parkhill J."/>
            <person name="Sebaihia M."/>
            <person name="Preston A."/>
            <person name="Murphy L.D."/>
            <person name="Thomson N.R."/>
            <person name="Harris D.E."/>
            <person name="Holden M.T.G."/>
            <person name="Churcher C.M."/>
            <person name="Bentley S.D."/>
            <person name="Mungall K.L."/>
            <person name="Cerdeno-Tarraga A.-M."/>
            <person name="Temple L."/>
            <person name="James K.D."/>
            <person name="Harris B."/>
            <person name="Quail M.A."/>
            <person name="Achtman M."/>
            <person name="Atkin R."/>
            <person name="Baker S."/>
            <person name="Basham D."/>
            <person name="Bason N."/>
            <person name="Cherevach I."/>
            <person name="Chillingworth T."/>
            <person name="Collins M."/>
            <person name="Cronin A."/>
            <person name="Davis P."/>
            <person name="Doggett J."/>
            <person name="Feltwell T."/>
            <person name="Goble A."/>
            <person name="Hamlin N."/>
            <person name="Hauser H."/>
            <person name="Holroyd S."/>
            <person name="Jagels K."/>
            <person name="Leather S."/>
            <person name="Moule S."/>
            <person name="Norberczak H."/>
            <person name="O'Neil S."/>
            <person name="Ormond D."/>
            <person name="Price C."/>
            <person name="Rabbinowitsch E."/>
            <person name="Rutter S."/>
            <person name="Sanders M."/>
            <person name="Saunders D."/>
            <person name="Seeger K."/>
            <person name="Sharp S."/>
            <person name="Simmonds M."/>
            <person name="Skelton J."/>
            <person name="Squares R."/>
            <person name="Squares S."/>
            <person name="Stevens K."/>
            <person name="Unwin L."/>
            <person name="Whitehead S."/>
            <person name="Barrell B.G."/>
            <person name="Maskell D.J."/>
        </authorList>
    </citation>
    <scope>NUCLEOTIDE SEQUENCE [LARGE SCALE GENOMIC DNA]</scope>
    <source>
        <strain>ATCC BAA-588 / NCTC 13252 / RB50</strain>
    </source>
</reference>